<accession>A7ZYL0</accession>
<comment type="function">
    <text evidence="1">Catalyzes the reversible conversion of 3-phosphohydroxypyruvate to phosphoserine and of 3-hydroxy-2-oxo-4-phosphonooxybutanoate to phosphohydroxythreonine.</text>
</comment>
<comment type="catalytic activity">
    <reaction evidence="1">
        <text>O-phospho-L-serine + 2-oxoglutarate = 3-phosphooxypyruvate + L-glutamate</text>
        <dbReference type="Rhea" id="RHEA:14329"/>
        <dbReference type="ChEBI" id="CHEBI:16810"/>
        <dbReference type="ChEBI" id="CHEBI:18110"/>
        <dbReference type="ChEBI" id="CHEBI:29985"/>
        <dbReference type="ChEBI" id="CHEBI:57524"/>
        <dbReference type="EC" id="2.6.1.52"/>
    </reaction>
</comment>
<comment type="catalytic activity">
    <reaction evidence="1">
        <text>4-(phosphooxy)-L-threonine + 2-oxoglutarate = (R)-3-hydroxy-2-oxo-4-phosphooxybutanoate + L-glutamate</text>
        <dbReference type="Rhea" id="RHEA:16573"/>
        <dbReference type="ChEBI" id="CHEBI:16810"/>
        <dbReference type="ChEBI" id="CHEBI:29985"/>
        <dbReference type="ChEBI" id="CHEBI:58452"/>
        <dbReference type="ChEBI" id="CHEBI:58538"/>
        <dbReference type="EC" id="2.6.1.52"/>
    </reaction>
</comment>
<comment type="cofactor">
    <cofactor evidence="1">
        <name>pyridoxal 5'-phosphate</name>
        <dbReference type="ChEBI" id="CHEBI:597326"/>
    </cofactor>
    <text evidence="1">Binds 1 pyridoxal phosphate per subunit.</text>
</comment>
<comment type="pathway">
    <text evidence="1">Amino-acid biosynthesis; L-serine biosynthesis; L-serine from 3-phospho-D-glycerate: step 2/3.</text>
</comment>
<comment type="pathway">
    <text evidence="1">Cofactor biosynthesis; pyridoxine 5'-phosphate biosynthesis; pyridoxine 5'-phosphate from D-erythrose 4-phosphate: step 3/5.</text>
</comment>
<comment type="subunit">
    <text evidence="1">Homodimer.</text>
</comment>
<comment type="subcellular location">
    <subcellularLocation>
        <location evidence="1">Cytoplasm</location>
    </subcellularLocation>
</comment>
<comment type="similarity">
    <text evidence="1">Belongs to the class-V pyridoxal-phosphate-dependent aminotransferase family. SerC subfamily.</text>
</comment>
<keyword id="KW-0028">Amino-acid biosynthesis</keyword>
<keyword id="KW-0032">Aminotransferase</keyword>
<keyword id="KW-0963">Cytoplasm</keyword>
<keyword id="KW-0663">Pyridoxal phosphate</keyword>
<keyword id="KW-0664">Pyridoxine biosynthesis</keyword>
<keyword id="KW-0718">Serine biosynthesis</keyword>
<keyword id="KW-0808">Transferase</keyword>
<organism>
    <name type="scientific">Escherichia coli O9:H4 (strain HS)</name>
    <dbReference type="NCBI Taxonomy" id="331112"/>
    <lineage>
        <taxon>Bacteria</taxon>
        <taxon>Pseudomonadati</taxon>
        <taxon>Pseudomonadota</taxon>
        <taxon>Gammaproteobacteria</taxon>
        <taxon>Enterobacterales</taxon>
        <taxon>Enterobacteriaceae</taxon>
        <taxon>Escherichia</taxon>
    </lineage>
</organism>
<dbReference type="EC" id="2.6.1.52" evidence="1"/>
<dbReference type="EMBL" id="CP000802">
    <property type="protein sequence ID" value="ABV05364.1"/>
    <property type="molecule type" value="Genomic_DNA"/>
</dbReference>
<dbReference type="RefSeq" id="WP_000057149.1">
    <property type="nucleotide sequence ID" value="NC_009800.1"/>
</dbReference>
<dbReference type="SMR" id="A7ZYL0"/>
<dbReference type="GeneID" id="93776511"/>
<dbReference type="KEGG" id="ecx:EcHS_A1013"/>
<dbReference type="HOGENOM" id="CLU_034866_0_2_6"/>
<dbReference type="UniPathway" id="UPA00135">
    <property type="reaction ID" value="UER00197"/>
</dbReference>
<dbReference type="UniPathway" id="UPA00244">
    <property type="reaction ID" value="UER00311"/>
</dbReference>
<dbReference type="GO" id="GO:0005737">
    <property type="term" value="C:cytoplasm"/>
    <property type="evidence" value="ECO:0007669"/>
    <property type="project" value="UniProtKB-SubCell"/>
</dbReference>
<dbReference type="GO" id="GO:0004648">
    <property type="term" value="F:O-phospho-L-serine:2-oxoglutarate aminotransferase activity"/>
    <property type="evidence" value="ECO:0007669"/>
    <property type="project" value="UniProtKB-UniRule"/>
</dbReference>
<dbReference type="GO" id="GO:0030170">
    <property type="term" value="F:pyridoxal phosphate binding"/>
    <property type="evidence" value="ECO:0007669"/>
    <property type="project" value="UniProtKB-UniRule"/>
</dbReference>
<dbReference type="GO" id="GO:0006564">
    <property type="term" value="P:L-serine biosynthetic process"/>
    <property type="evidence" value="ECO:0007669"/>
    <property type="project" value="UniProtKB-UniRule"/>
</dbReference>
<dbReference type="GO" id="GO:0008615">
    <property type="term" value="P:pyridoxine biosynthetic process"/>
    <property type="evidence" value="ECO:0007669"/>
    <property type="project" value="UniProtKB-UniRule"/>
</dbReference>
<dbReference type="CDD" id="cd00611">
    <property type="entry name" value="PSAT_like"/>
    <property type="match status" value="1"/>
</dbReference>
<dbReference type="FunFam" id="3.40.640.10:FF:000010">
    <property type="entry name" value="Phosphoserine aminotransferase"/>
    <property type="match status" value="1"/>
</dbReference>
<dbReference type="FunFam" id="3.90.1150.10:FF:000006">
    <property type="entry name" value="Phosphoserine aminotransferase"/>
    <property type="match status" value="1"/>
</dbReference>
<dbReference type="Gene3D" id="3.90.1150.10">
    <property type="entry name" value="Aspartate Aminotransferase, domain 1"/>
    <property type="match status" value="1"/>
</dbReference>
<dbReference type="Gene3D" id="3.40.640.10">
    <property type="entry name" value="Type I PLP-dependent aspartate aminotransferase-like (Major domain)"/>
    <property type="match status" value="1"/>
</dbReference>
<dbReference type="HAMAP" id="MF_00160">
    <property type="entry name" value="SerC_aminotrans_5"/>
    <property type="match status" value="1"/>
</dbReference>
<dbReference type="InterPro" id="IPR000192">
    <property type="entry name" value="Aminotrans_V_dom"/>
</dbReference>
<dbReference type="InterPro" id="IPR020578">
    <property type="entry name" value="Aminotrans_V_PyrdxlP_BS"/>
</dbReference>
<dbReference type="InterPro" id="IPR022278">
    <property type="entry name" value="Pser_aminoTfrase"/>
</dbReference>
<dbReference type="InterPro" id="IPR015424">
    <property type="entry name" value="PyrdxlP-dep_Trfase"/>
</dbReference>
<dbReference type="InterPro" id="IPR015421">
    <property type="entry name" value="PyrdxlP-dep_Trfase_major"/>
</dbReference>
<dbReference type="InterPro" id="IPR015422">
    <property type="entry name" value="PyrdxlP-dep_Trfase_small"/>
</dbReference>
<dbReference type="NCBIfam" id="NF003764">
    <property type="entry name" value="PRK05355.1"/>
    <property type="match status" value="1"/>
</dbReference>
<dbReference type="NCBIfam" id="TIGR01364">
    <property type="entry name" value="serC_1"/>
    <property type="match status" value="1"/>
</dbReference>
<dbReference type="PANTHER" id="PTHR43247">
    <property type="entry name" value="PHOSPHOSERINE AMINOTRANSFERASE"/>
    <property type="match status" value="1"/>
</dbReference>
<dbReference type="PANTHER" id="PTHR43247:SF1">
    <property type="entry name" value="PHOSPHOSERINE AMINOTRANSFERASE"/>
    <property type="match status" value="1"/>
</dbReference>
<dbReference type="Pfam" id="PF00266">
    <property type="entry name" value="Aminotran_5"/>
    <property type="match status" value="1"/>
</dbReference>
<dbReference type="PIRSF" id="PIRSF000525">
    <property type="entry name" value="SerC"/>
    <property type="match status" value="1"/>
</dbReference>
<dbReference type="SUPFAM" id="SSF53383">
    <property type="entry name" value="PLP-dependent transferases"/>
    <property type="match status" value="1"/>
</dbReference>
<dbReference type="PROSITE" id="PS00595">
    <property type="entry name" value="AA_TRANSFER_CLASS_5"/>
    <property type="match status" value="1"/>
</dbReference>
<proteinExistence type="inferred from homology"/>
<sequence length="362" mass="39840">MAQIFNFSSGPAMLPAEVLKQAQQELRDWNGLGTSVMEVSHRGKEFIQVAEEAEKDFRDLLNVPSNYKVLFCHGGGRGQFAAVPLNILGDKTTADYVDAGYWAASAIKEAKKYCTPNVFDAKVTVDGLRAVKPMREWQLSDNAAYMHYCPNETIDGIAIDETPDFGKDVVVAADFSSTILSRPIDVSRYGVIYAGAQKNIGPAGLTIVIVREDLLGKANIACPSILDYSILNDNGSMFNTPPTFAWYLSGLVFKWLKANGGVAEMDKINQQKAELLYGVIDNSDFYRNDVAKANRSRMNVPFQLADSALDKLFLEESFAAGLHALKGHRVVGGMRASIYNAMPLEGVKALTDFMVEFERRHG</sequence>
<name>SERC_ECOHS</name>
<gene>
    <name evidence="1" type="primary">serC</name>
    <name type="ordered locus">EcHS_A1013</name>
</gene>
<protein>
    <recommendedName>
        <fullName evidence="1">Phosphoserine aminotransferase</fullName>
        <ecNumber evidence="1">2.6.1.52</ecNumber>
    </recommendedName>
    <alternativeName>
        <fullName evidence="1">Phosphohydroxythreonine aminotransferase</fullName>
        <shortName evidence="1">PSAT</shortName>
    </alternativeName>
</protein>
<feature type="chain" id="PRO_1000203528" description="Phosphoserine aminotransferase">
    <location>
        <begin position="1"/>
        <end position="362"/>
    </location>
</feature>
<feature type="binding site" evidence="1">
    <location>
        <position position="9"/>
    </location>
    <ligand>
        <name>L-glutamate</name>
        <dbReference type="ChEBI" id="CHEBI:29985"/>
    </ligand>
</feature>
<feature type="binding site" evidence="1">
    <location>
        <position position="42"/>
    </location>
    <ligand>
        <name>L-glutamate</name>
        <dbReference type="ChEBI" id="CHEBI:29985"/>
    </ligand>
</feature>
<feature type="binding site" evidence="1">
    <location>
        <begin position="76"/>
        <end position="77"/>
    </location>
    <ligand>
        <name>pyridoxal 5'-phosphate</name>
        <dbReference type="ChEBI" id="CHEBI:597326"/>
    </ligand>
</feature>
<feature type="binding site" evidence="1">
    <location>
        <position position="102"/>
    </location>
    <ligand>
        <name>pyridoxal 5'-phosphate</name>
        <dbReference type="ChEBI" id="CHEBI:597326"/>
    </ligand>
</feature>
<feature type="binding site" evidence="1">
    <location>
        <position position="153"/>
    </location>
    <ligand>
        <name>pyridoxal 5'-phosphate</name>
        <dbReference type="ChEBI" id="CHEBI:597326"/>
    </ligand>
</feature>
<feature type="binding site" evidence="1">
    <location>
        <position position="174"/>
    </location>
    <ligand>
        <name>pyridoxal 5'-phosphate</name>
        <dbReference type="ChEBI" id="CHEBI:597326"/>
    </ligand>
</feature>
<feature type="binding site" evidence="1">
    <location>
        <position position="197"/>
    </location>
    <ligand>
        <name>pyridoxal 5'-phosphate</name>
        <dbReference type="ChEBI" id="CHEBI:597326"/>
    </ligand>
</feature>
<feature type="binding site" evidence="1">
    <location>
        <begin position="239"/>
        <end position="240"/>
    </location>
    <ligand>
        <name>pyridoxal 5'-phosphate</name>
        <dbReference type="ChEBI" id="CHEBI:597326"/>
    </ligand>
</feature>
<feature type="modified residue" description="N6-(pyridoxal phosphate)lysine" evidence="1">
    <location>
        <position position="198"/>
    </location>
</feature>
<reference key="1">
    <citation type="journal article" date="2008" name="J. Bacteriol.">
        <title>The pangenome structure of Escherichia coli: comparative genomic analysis of E. coli commensal and pathogenic isolates.</title>
        <authorList>
            <person name="Rasko D.A."/>
            <person name="Rosovitz M.J."/>
            <person name="Myers G.S.A."/>
            <person name="Mongodin E.F."/>
            <person name="Fricke W.F."/>
            <person name="Gajer P."/>
            <person name="Crabtree J."/>
            <person name="Sebaihia M."/>
            <person name="Thomson N.R."/>
            <person name="Chaudhuri R."/>
            <person name="Henderson I.R."/>
            <person name="Sperandio V."/>
            <person name="Ravel J."/>
        </authorList>
    </citation>
    <scope>NUCLEOTIDE SEQUENCE [LARGE SCALE GENOMIC DNA]</scope>
    <source>
        <strain>HS</strain>
    </source>
</reference>
<evidence type="ECO:0000255" key="1">
    <source>
        <dbReference type="HAMAP-Rule" id="MF_00160"/>
    </source>
</evidence>